<sequence length="357" mass="38188">MASGGHERANEDYRVSGITGCSKTPQPETQDSLQTSSQSSALCTAPVAAANLGPSLRRNVVSERERRRRISLSCEHLRALLPQFDGRREDMASVLEMSVYFLQLAHSMDPSWEQLSVPQPPQEMWHMWQGDVLQVTLANQIADSKPDSGIAKPSAVSRVQDPPCFGMLDTDQSQATERESELLERPSSCPGHRQSALSFSEPESSSLGPGLPPWIPHSWQPATPEASDIVPGGSHQVASLAGDPESSGMLAEEANLVLASVPDARYTTGAGSDVVDGAPFLMTTNPDWWLGSVEGRGGPALARSSPVDGAEPSFIGDPELCSQELQAGPGELWGLDFGSPGLALKDEADSIFPDFFP</sequence>
<protein>
    <recommendedName>
        <fullName>Spermatogenesis- and oogenesis-specific basic helix-loop-helix-containing protein 1</fullName>
    </recommendedName>
</protein>
<accession>Q6IUP1</accession>
<accession>B2RTA1</accession>
<comment type="function">
    <text evidence="6 7">Transcription regulator of both male and female germline differentiation. Suppresses genes involved in spermatogonial stem cells maintenance, and induces genes important for spermatogonial differentiation (PubMed:22056784). Coordinates oocyte differentiation without affecting meiosis I (PubMed:28504655).</text>
</comment>
<comment type="subunit">
    <text evidence="6">Forms both hetero- and homodimers with SOHLH2.</text>
</comment>
<comment type="subcellular location">
    <subcellularLocation>
        <location evidence="4 7">Cytoplasm</location>
    </subcellularLocation>
    <subcellularLocation>
        <location evidence="1 4 7">Nucleus</location>
    </subcellularLocation>
</comment>
<comment type="tissue specificity">
    <text evidence="3 4 6">In males, it is mainly expressed in testis, while in females it is mainly expressed in ovary. In testis, it is exclusively expressed in spermatogonia, with a preference for prespermatogonia and type A spermatogonia. In ovary, it is detected in germ cell cysts, primordial follicles, and primary follicles but is undetectable by the secondary follicle stage (at protein level). Expressed in the majority of spermatogonia in adult animals, but not in the most undifferentiated spermatogonial population (PubMed:22056784).</text>
</comment>
<comment type="developmental stage">
    <text evidence="3 4 7">In male testis, it is expressed as early as 12.5 dpc. After birth, it localizes to type A spermatogonia in 7-day-old testis and adult testis, but not in spermatocytes. In spermatogonia, it is initially detected in stage IV Aal spermatogonia and strongly expressed in Aal, A1, A2, A3, A4, intermediate and type B spermatogonia (at protein level). In ovary, it is detected at 15.5 dpc, when oocytes have entered meiosis I, although a low level expression is detectable at 13.5 dpc. Expressed in oocytes of germ cell cysts as well as primordial follicles in the newborn ovary. In adult ovaries, it is preferentially expressed in primordial oocytes but disappear rapidly as the oocytes are recruited to form primary and secondary (multilayer and preantral) follicles. During oocyte differentiation, protein appearance at 15.5 dpc correlates with SOHLH2 translocation from the cytoplasm into the nucleus and is dependent on SOHLH2 expression (PubMed:28504655).</text>
</comment>
<comment type="induction">
    <text evidence="5">Transcription is activated by DMRT1 in undifferentiated spermatogonia.</text>
</comment>
<comment type="disruption phenotype">
    <text evidence="3 4 7">Knockout mice are infertile. Males lacking SOHLH1 display disrupted spermatogonial differentiation into spermatocytes and show a strong down-regulation Lhx8 and Neurog3/Ngn3 genes (PubMed:16564520). Females display perturbed follicular formation, probably partially due to down-regulation of Nobox and Figla, 2 genes required for folliculogenesis (PubMed:16690745). Fertility could be restored by conditional expression of a SOHLH1 transgene after the onset of meiosis (PubMed:28504655).</text>
</comment>
<dbReference type="EMBL" id="AY623913">
    <property type="protein sequence ID" value="AAT39886.1"/>
    <property type="molecule type" value="mRNA"/>
</dbReference>
<dbReference type="EMBL" id="AL731682">
    <property type="status" value="NOT_ANNOTATED_CDS"/>
    <property type="molecule type" value="Genomic_DNA"/>
</dbReference>
<dbReference type="EMBL" id="BC139189">
    <property type="protein sequence ID" value="AAI39190.1"/>
    <property type="molecule type" value="mRNA"/>
</dbReference>
<dbReference type="EMBL" id="BC139190">
    <property type="protein sequence ID" value="AAI39191.1"/>
    <property type="molecule type" value="mRNA"/>
</dbReference>
<dbReference type="CCDS" id="CCDS15793.1"/>
<dbReference type="RefSeq" id="NP_001001714.1">
    <property type="nucleotide sequence ID" value="NM_001001714.2"/>
</dbReference>
<dbReference type="SMR" id="Q6IUP1"/>
<dbReference type="FunCoup" id="Q6IUP1">
    <property type="interactions" value="466"/>
</dbReference>
<dbReference type="STRING" id="10090.ENSMUSP00000076253"/>
<dbReference type="PhosphoSitePlus" id="Q6IUP1"/>
<dbReference type="PaxDb" id="10090-ENSMUSP00000076253"/>
<dbReference type="ProteomicsDB" id="257543"/>
<dbReference type="Antibodypedia" id="32071">
    <property type="antibodies" value="147 antibodies from 21 providers"/>
</dbReference>
<dbReference type="DNASU" id="227631"/>
<dbReference type="Ensembl" id="ENSMUST00000076989.7">
    <property type="protein sequence ID" value="ENSMUSP00000076253.7"/>
    <property type="gene ID" value="ENSMUSG00000059625.7"/>
</dbReference>
<dbReference type="GeneID" id="227631"/>
<dbReference type="KEGG" id="mmu:227631"/>
<dbReference type="UCSC" id="uc008itn.1">
    <property type="organism name" value="mouse"/>
</dbReference>
<dbReference type="AGR" id="MGI:2684956"/>
<dbReference type="CTD" id="402381"/>
<dbReference type="MGI" id="MGI:2684956">
    <property type="gene designation" value="Sohlh1"/>
</dbReference>
<dbReference type="VEuPathDB" id="HostDB:ENSMUSG00000059625"/>
<dbReference type="eggNOG" id="ENOG502TDNY">
    <property type="taxonomic scope" value="Eukaryota"/>
</dbReference>
<dbReference type="GeneTree" id="ENSGT00390000000656"/>
<dbReference type="HOGENOM" id="CLU_066456_0_0_1"/>
<dbReference type="InParanoid" id="Q6IUP1"/>
<dbReference type="OMA" id="WQGDVLQ"/>
<dbReference type="OrthoDB" id="5966556at2759"/>
<dbReference type="PhylomeDB" id="Q6IUP1"/>
<dbReference type="TreeFam" id="TF336841"/>
<dbReference type="BioGRID-ORCS" id="227631">
    <property type="hits" value="1 hit in 79 CRISPR screens"/>
</dbReference>
<dbReference type="PRO" id="PR:Q6IUP1"/>
<dbReference type="Proteomes" id="UP000000589">
    <property type="component" value="Chromosome 2"/>
</dbReference>
<dbReference type="RNAct" id="Q6IUP1">
    <property type="molecule type" value="protein"/>
</dbReference>
<dbReference type="Bgee" id="ENSMUSG00000059625">
    <property type="expression patterns" value="Expressed in epiblast cell in embryo and 13 other cell types or tissues"/>
</dbReference>
<dbReference type="GO" id="GO:0005737">
    <property type="term" value="C:cytoplasm"/>
    <property type="evidence" value="ECO:0000314"/>
    <property type="project" value="UniProtKB"/>
</dbReference>
<dbReference type="GO" id="GO:0001673">
    <property type="term" value="C:male germ cell nucleus"/>
    <property type="evidence" value="ECO:0000314"/>
    <property type="project" value="MGI"/>
</dbReference>
<dbReference type="GO" id="GO:0005634">
    <property type="term" value="C:nucleus"/>
    <property type="evidence" value="ECO:0000314"/>
    <property type="project" value="UniProtKB"/>
</dbReference>
<dbReference type="GO" id="GO:0001228">
    <property type="term" value="F:DNA-binding transcription activator activity, RNA polymerase II-specific"/>
    <property type="evidence" value="ECO:0000314"/>
    <property type="project" value="NTNU_SB"/>
</dbReference>
<dbReference type="GO" id="GO:0003700">
    <property type="term" value="F:DNA-binding transcription factor activity"/>
    <property type="evidence" value="ECO:0000314"/>
    <property type="project" value="MGI"/>
</dbReference>
<dbReference type="GO" id="GO:0042802">
    <property type="term" value="F:identical protein binding"/>
    <property type="evidence" value="ECO:0000353"/>
    <property type="project" value="MGI"/>
</dbReference>
<dbReference type="GO" id="GO:0046982">
    <property type="term" value="F:protein heterodimerization activity"/>
    <property type="evidence" value="ECO:0000314"/>
    <property type="project" value="UniProtKB"/>
</dbReference>
<dbReference type="GO" id="GO:0042803">
    <property type="term" value="F:protein homodimerization activity"/>
    <property type="evidence" value="ECO:0000314"/>
    <property type="project" value="UniProtKB"/>
</dbReference>
<dbReference type="GO" id="GO:0000977">
    <property type="term" value="F:RNA polymerase II transcription regulatory region sequence-specific DNA binding"/>
    <property type="evidence" value="ECO:0000314"/>
    <property type="project" value="NTNU_SB"/>
</dbReference>
<dbReference type="GO" id="GO:0030154">
    <property type="term" value="P:cell differentiation"/>
    <property type="evidence" value="ECO:0000314"/>
    <property type="project" value="UniProtKB"/>
</dbReference>
<dbReference type="GO" id="GO:0009994">
    <property type="term" value="P:oocyte differentiation"/>
    <property type="evidence" value="ECO:0000314"/>
    <property type="project" value="UniProtKB"/>
</dbReference>
<dbReference type="GO" id="GO:0048477">
    <property type="term" value="P:oogenesis"/>
    <property type="evidence" value="ECO:0000315"/>
    <property type="project" value="MGI"/>
</dbReference>
<dbReference type="GO" id="GO:0001541">
    <property type="term" value="P:ovarian follicle development"/>
    <property type="evidence" value="ECO:0000315"/>
    <property type="project" value="MGI"/>
</dbReference>
<dbReference type="GO" id="GO:0045893">
    <property type="term" value="P:positive regulation of DNA-templated transcription"/>
    <property type="evidence" value="ECO:0000314"/>
    <property type="project" value="MGI"/>
</dbReference>
<dbReference type="GO" id="GO:0045944">
    <property type="term" value="P:positive regulation of transcription by RNA polymerase II"/>
    <property type="evidence" value="ECO:0000314"/>
    <property type="project" value="NTNU_SB"/>
</dbReference>
<dbReference type="GO" id="GO:0010468">
    <property type="term" value="P:regulation of gene expression"/>
    <property type="evidence" value="ECO:0000315"/>
    <property type="project" value="MGI"/>
</dbReference>
<dbReference type="GO" id="GO:0007283">
    <property type="term" value="P:spermatogenesis"/>
    <property type="evidence" value="ECO:0000314"/>
    <property type="project" value="UniProtKB"/>
</dbReference>
<dbReference type="Gene3D" id="4.10.280.10">
    <property type="entry name" value="Helix-loop-helix DNA-binding domain"/>
    <property type="match status" value="1"/>
</dbReference>
<dbReference type="InterPro" id="IPR011598">
    <property type="entry name" value="bHLH_dom"/>
</dbReference>
<dbReference type="InterPro" id="IPR036638">
    <property type="entry name" value="HLH_DNA-bd_sf"/>
</dbReference>
<dbReference type="InterPro" id="IPR039583">
    <property type="entry name" value="TCFL5/SOLH1/2"/>
</dbReference>
<dbReference type="PANTHER" id="PTHR15402:SF4">
    <property type="entry name" value="SPERMATOGENESIS- AND OOGENESIS-SPECIFIC BASIC HELIX-LOOP-HELIX-CONTAINING PROTEIN 1"/>
    <property type="match status" value="1"/>
</dbReference>
<dbReference type="PANTHER" id="PTHR15402">
    <property type="entry name" value="TRANSCRIPTION FACTOR-LIKE 5 PROTEIN"/>
    <property type="match status" value="1"/>
</dbReference>
<dbReference type="Pfam" id="PF00010">
    <property type="entry name" value="HLH"/>
    <property type="match status" value="1"/>
</dbReference>
<dbReference type="SUPFAM" id="SSF47459">
    <property type="entry name" value="HLH, helix-loop-helix DNA-binding domain"/>
    <property type="match status" value="1"/>
</dbReference>
<dbReference type="PROSITE" id="PS50888">
    <property type="entry name" value="BHLH"/>
    <property type="match status" value="1"/>
</dbReference>
<feature type="chain" id="PRO_0000315699" description="Spermatogenesis- and oogenesis-specific basic helix-loop-helix-containing protein 1">
    <location>
        <begin position="1"/>
        <end position="357"/>
    </location>
</feature>
<feature type="domain" description="bHLH" evidence="1">
    <location>
        <begin position="54"/>
        <end position="105"/>
    </location>
</feature>
<feature type="region of interest" description="Disordered" evidence="2">
    <location>
        <begin position="1"/>
        <end position="40"/>
    </location>
</feature>
<feature type="region of interest" description="Disordered" evidence="2">
    <location>
        <begin position="145"/>
        <end position="210"/>
    </location>
</feature>
<feature type="compositionally biased region" description="Basic and acidic residues" evidence="2">
    <location>
        <begin position="1"/>
        <end position="14"/>
    </location>
</feature>
<feature type="compositionally biased region" description="Polar residues" evidence="2">
    <location>
        <begin position="19"/>
        <end position="31"/>
    </location>
</feature>
<feature type="compositionally biased region" description="Low complexity" evidence="2">
    <location>
        <begin position="200"/>
        <end position="209"/>
    </location>
</feature>
<gene>
    <name type="primary">Sohlh1</name>
    <name type="synonym">Gm110</name>
    <name type="synonym">Tohlh1</name>
</gene>
<keyword id="KW-0963">Cytoplasm</keyword>
<keyword id="KW-0217">Developmental protein</keyword>
<keyword id="KW-0221">Differentiation</keyword>
<keyword id="KW-0238">DNA-binding</keyword>
<keyword id="KW-0539">Nucleus</keyword>
<keyword id="KW-1185">Reference proteome</keyword>
<keyword id="KW-0744">Spermatogenesis</keyword>
<keyword id="KW-0804">Transcription</keyword>
<keyword id="KW-0805">Transcription regulation</keyword>
<reference key="1">
    <citation type="journal article" date="2006" name="Proc. Natl. Acad. Sci. U.S.A.">
        <title>Oogenesis requires germ cell-specific transcriptional regulators Sohlh1 and Lhx8.</title>
        <authorList>
            <person name="Pangas S.A."/>
            <person name="Choi Y."/>
            <person name="Ballow D.J."/>
            <person name="Zhao Y."/>
            <person name="Westphal H."/>
            <person name="Matzuk M.M."/>
            <person name="Rajkovic A."/>
        </authorList>
    </citation>
    <scope>NUCLEOTIDE SEQUENCE [MRNA]</scope>
    <scope>FUNCTION</scope>
    <scope>SUBCELLULAR LOCATION</scope>
    <scope>TISSUE SPECIFICITY</scope>
    <scope>DEVELOPMENTAL STAGE</scope>
    <scope>DISRUPTION PHENOTYPE</scope>
    <source>
        <strain>C57BL/6J</strain>
    </source>
</reference>
<reference key="2">
    <citation type="journal article" date="2009" name="PLoS Biol.">
        <title>Lineage-specific biology revealed by a finished genome assembly of the mouse.</title>
        <authorList>
            <person name="Church D.M."/>
            <person name="Goodstadt L."/>
            <person name="Hillier L.W."/>
            <person name="Zody M.C."/>
            <person name="Goldstein S."/>
            <person name="She X."/>
            <person name="Bult C.J."/>
            <person name="Agarwala R."/>
            <person name="Cherry J.L."/>
            <person name="DiCuccio M."/>
            <person name="Hlavina W."/>
            <person name="Kapustin Y."/>
            <person name="Meric P."/>
            <person name="Maglott D."/>
            <person name="Birtle Z."/>
            <person name="Marques A.C."/>
            <person name="Graves T."/>
            <person name="Zhou S."/>
            <person name="Teague B."/>
            <person name="Potamousis K."/>
            <person name="Churas C."/>
            <person name="Place M."/>
            <person name="Herschleb J."/>
            <person name="Runnheim R."/>
            <person name="Forrest D."/>
            <person name="Amos-Landgraf J."/>
            <person name="Schwartz D.C."/>
            <person name="Cheng Z."/>
            <person name="Lindblad-Toh K."/>
            <person name="Eichler E.E."/>
            <person name="Ponting C.P."/>
        </authorList>
    </citation>
    <scope>NUCLEOTIDE SEQUENCE [LARGE SCALE GENOMIC DNA]</scope>
    <source>
        <strain>C57BL/6J</strain>
    </source>
</reference>
<reference key="3">
    <citation type="journal article" date="2004" name="Genome Res.">
        <title>The status, quality, and expansion of the NIH full-length cDNA project: the Mammalian Gene Collection (MGC).</title>
        <authorList>
            <consortium name="The MGC Project Team"/>
        </authorList>
    </citation>
    <scope>NUCLEOTIDE SEQUENCE [LARGE SCALE MRNA]</scope>
    <source>
        <tissue>Brain</tissue>
    </source>
</reference>
<reference key="4">
    <citation type="journal article" date="2006" name="Dev. Biol.">
        <title>Sohlh1 is essential for spermatogonial differentiation.</title>
        <authorList>
            <person name="Ballow D."/>
            <person name="Meistrich M.L."/>
            <person name="Matzuk M."/>
            <person name="Rajkovic A."/>
        </authorList>
    </citation>
    <scope>FUNCTION</scope>
    <scope>TISSUE SPECIFICITY</scope>
    <scope>DEVELOPMENTAL STAGE</scope>
    <scope>DISRUPTION PHENOTYPE</scope>
</reference>
<reference key="5">
    <citation type="journal article" date="2010" name="Dev. Cell">
        <title>The mammalian doublesex homolog DMRT1 is a transcriptional gatekeeper that controls the mitosis versus meiosis decision in male germ cells.</title>
        <authorList>
            <person name="Matson C.K."/>
            <person name="Murphy M.W."/>
            <person name="Griswold M.D."/>
            <person name="Yoshida S."/>
            <person name="Bardwell V.J."/>
            <person name="Zarkower D."/>
        </authorList>
    </citation>
    <scope>INDUCTION</scope>
</reference>
<reference key="6">
    <citation type="journal article" date="2012" name="Dev. Biol.">
        <title>SOHLH1 and SOHLH2 coordinate spermatogonial differentiation.</title>
        <authorList>
            <person name="Suzuki H."/>
            <person name="Ahn H.W."/>
            <person name="Chu T."/>
            <person name="Bowden W."/>
            <person name="Gassei K."/>
            <person name="Orwig K."/>
            <person name="Rajkovic A."/>
        </authorList>
    </citation>
    <scope>TISSUE SPECIFICITY</scope>
    <scope>FUNCTION</scope>
    <scope>SUBUNIT</scope>
</reference>
<reference key="7">
    <citation type="journal article" date="2017" name="J. Clin. Invest.">
        <title>Transcription factors SOHLH1 and SOHLH2 coordinate oocyte differentiation without affecting meiosis I.</title>
        <authorList>
            <person name="Shin Y.H."/>
            <person name="Ren Y."/>
            <person name="Suzuki H."/>
            <person name="Golnoski K.J."/>
            <person name="Ahn H.W."/>
            <person name="Mico V."/>
            <person name="Rajkovic A."/>
        </authorList>
    </citation>
    <scope>DISRUPTION PHENOTYPE</scope>
    <scope>FUNCTION</scope>
    <scope>SUBCELLULAR LOCATION</scope>
    <scope>DEVELOPMENTAL STAGE</scope>
</reference>
<name>SOLH1_MOUSE</name>
<proteinExistence type="evidence at protein level"/>
<organism>
    <name type="scientific">Mus musculus</name>
    <name type="common">Mouse</name>
    <dbReference type="NCBI Taxonomy" id="10090"/>
    <lineage>
        <taxon>Eukaryota</taxon>
        <taxon>Metazoa</taxon>
        <taxon>Chordata</taxon>
        <taxon>Craniata</taxon>
        <taxon>Vertebrata</taxon>
        <taxon>Euteleostomi</taxon>
        <taxon>Mammalia</taxon>
        <taxon>Eutheria</taxon>
        <taxon>Euarchontoglires</taxon>
        <taxon>Glires</taxon>
        <taxon>Rodentia</taxon>
        <taxon>Myomorpha</taxon>
        <taxon>Muroidea</taxon>
        <taxon>Muridae</taxon>
        <taxon>Murinae</taxon>
        <taxon>Mus</taxon>
        <taxon>Mus</taxon>
    </lineage>
</organism>
<evidence type="ECO:0000255" key="1">
    <source>
        <dbReference type="PROSITE-ProRule" id="PRU00981"/>
    </source>
</evidence>
<evidence type="ECO:0000256" key="2">
    <source>
        <dbReference type="SAM" id="MobiDB-lite"/>
    </source>
</evidence>
<evidence type="ECO:0000269" key="3">
    <source>
    </source>
</evidence>
<evidence type="ECO:0000269" key="4">
    <source>
    </source>
</evidence>
<evidence type="ECO:0000269" key="5">
    <source>
    </source>
</evidence>
<evidence type="ECO:0000269" key="6">
    <source>
    </source>
</evidence>
<evidence type="ECO:0000269" key="7">
    <source>
    </source>
</evidence>